<gene>
    <name evidence="1" type="primary">ndhI</name>
</gene>
<keyword id="KW-0004">4Fe-4S</keyword>
<keyword id="KW-0150">Chloroplast</keyword>
<keyword id="KW-0408">Iron</keyword>
<keyword id="KW-0411">Iron-sulfur</keyword>
<keyword id="KW-0472">Membrane</keyword>
<keyword id="KW-0479">Metal-binding</keyword>
<keyword id="KW-0520">NAD</keyword>
<keyword id="KW-0521">NADP</keyword>
<keyword id="KW-0934">Plastid</keyword>
<keyword id="KW-0618">Plastoquinone</keyword>
<keyword id="KW-0874">Quinone</keyword>
<keyword id="KW-0677">Repeat</keyword>
<keyword id="KW-0793">Thylakoid</keyword>
<keyword id="KW-1278">Translocase</keyword>
<name>NDHI_DESFU</name>
<evidence type="ECO:0000255" key="1">
    <source>
        <dbReference type="HAMAP-Rule" id="MF_01351"/>
    </source>
</evidence>
<proteinExistence type="inferred from homology"/>
<dbReference type="EC" id="7.1.1.-" evidence="1"/>
<dbReference type="EMBL" id="AF383773">
    <property type="protein sequence ID" value="AAN61715.1"/>
    <property type="molecule type" value="Genomic_DNA"/>
</dbReference>
<dbReference type="SMR" id="Q8HVT9"/>
<dbReference type="GO" id="GO:0009535">
    <property type="term" value="C:chloroplast thylakoid membrane"/>
    <property type="evidence" value="ECO:0007669"/>
    <property type="project" value="UniProtKB-SubCell"/>
</dbReference>
<dbReference type="GO" id="GO:0051539">
    <property type="term" value="F:4 iron, 4 sulfur cluster binding"/>
    <property type="evidence" value="ECO:0007669"/>
    <property type="project" value="UniProtKB-KW"/>
</dbReference>
<dbReference type="GO" id="GO:0005506">
    <property type="term" value="F:iron ion binding"/>
    <property type="evidence" value="ECO:0007669"/>
    <property type="project" value="UniProtKB-UniRule"/>
</dbReference>
<dbReference type="GO" id="GO:0008137">
    <property type="term" value="F:NADH dehydrogenase (ubiquinone) activity"/>
    <property type="evidence" value="ECO:0007669"/>
    <property type="project" value="InterPro"/>
</dbReference>
<dbReference type="GO" id="GO:0048038">
    <property type="term" value="F:quinone binding"/>
    <property type="evidence" value="ECO:0007669"/>
    <property type="project" value="UniProtKB-KW"/>
</dbReference>
<dbReference type="GO" id="GO:0019684">
    <property type="term" value="P:photosynthesis, light reaction"/>
    <property type="evidence" value="ECO:0007669"/>
    <property type="project" value="UniProtKB-UniRule"/>
</dbReference>
<dbReference type="FunFam" id="3.30.70.3270:FF:000006">
    <property type="entry name" value="NAD(P)H-quinone oxidoreductase subunit I, chloroplastic"/>
    <property type="match status" value="1"/>
</dbReference>
<dbReference type="Gene3D" id="3.30.70.3270">
    <property type="match status" value="1"/>
</dbReference>
<dbReference type="HAMAP" id="MF_01351">
    <property type="entry name" value="NDH1_NuoI"/>
    <property type="match status" value="1"/>
</dbReference>
<dbReference type="InterPro" id="IPR017896">
    <property type="entry name" value="4Fe4S_Fe-S-bd"/>
</dbReference>
<dbReference type="InterPro" id="IPR017900">
    <property type="entry name" value="4Fe4S_Fe_S_CS"/>
</dbReference>
<dbReference type="InterPro" id="IPR010226">
    <property type="entry name" value="NADH_quinone_OxRdtase_chainI"/>
</dbReference>
<dbReference type="InterPro" id="IPR004497">
    <property type="entry name" value="NDHI"/>
</dbReference>
<dbReference type="NCBIfam" id="TIGR00403">
    <property type="entry name" value="ndhI"/>
    <property type="match status" value="1"/>
</dbReference>
<dbReference type="NCBIfam" id="TIGR01971">
    <property type="entry name" value="NuoI"/>
    <property type="match status" value="1"/>
</dbReference>
<dbReference type="NCBIfam" id="NF004537">
    <property type="entry name" value="PRK05888.1-3"/>
    <property type="match status" value="1"/>
</dbReference>
<dbReference type="PANTHER" id="PTHR47275">
    <property type="entry name" value="NAD(P)H-QUINONE OXIDOREDUCTASE SUBUNIT I, CHLOROPLASTIC"/>
    <property type="match status" value="1"/>
</dbReference>
<dbReference type="PANTHER" id="PTHR47275:SF1">
    <property type="entry name" value="NAD(P)H-QUINONE OXIDOREDUCTASE SUBUNIT I, CHLOROPLASTIC"/>
    <property type="match status" value="1"/>
</dbReference>
<dbReference type="Pfam" id="PF00037">
    <property type="entry name" value="Fer4"/>
    <property type="match status" value="2"/>
</dbReference>
<dbReference type="SUPFAM" id="SSF54862">
    <property type="entry name" value="4Fe-4S ferredoxins"/>
    <property type="match status" value="1"/>
</dbReference>
<dbReference type="PROSITE" id="PS00198">
    <property type="entry name" value="4FE4S_FER_1"/>
    <property type="match status" value="2"/>
</dbReference>
<dbReference type="PROSITE" id="PS51379">
    <property type="entry name" value="4FE4S_FER_2"/>
    <property type="match status" value="2"/>
</dbReference>
<reference key="1">
    <citation type="submission" date="2003-01" db="EMBL/GenBank/DDBJ databases">
        <title>Chloroplast DNA phylogeny of tribe Heliantheae (Asteraceae).</title>
        <authorList>
            <person name="Panero J.L."/>
            <person name="Baldwin B.G."/>
            <person name="Schilling E.E."/>
            <person name="Clevinger J.A."/>
        </authorList>
    </citation>
    <scope>NUCLEOTIDE SEQUENCE [GENOMIC DNA]</scope>
</reference>
<sequence length="166" mass="19475">MFPMVTEFMNYGQQTVRAARYIGQGFMITLSHANRLPVTIQYPYEKLITSERFRGRIHFEFDKCIACEVCVRVCPIDLPVVDWKLETDIRKKRLLNYSIDFGICIFCGNCVEYCPTNCLSMTEEYELSTYDRHELNYNQIALGRLPMSIIDDYTIRTILNLPEIKT</sequence>
<accession>Q8HVT9</accession>
<protein>
    <recommendedName>
        <fullName evidence="1">NAD(P)H-quinone oxidoreductase subunit I, chloroplastic</fullName>
        <ecNumber evidence="1">7.1.1.-</ecNumber>
    </recommendedName>
    <alternativeName>
        <fullName evidence="1">NAD(P)H dehydrogenase subunit I</fullName>
        <shortName evidence="1">NDH subunit I</shortName>
    </alternativeName>
    <alternativeName>
        <fullName evidence="1">NADH-plastoquinone oxidoreductase subunit I</fullName>
    </alternativeName>
</protein>
<comment type="function">
    <text evidence="1">NDH shuttles electrons from NAD(P)H:plastoquinone, via FMN and iron-sulfur (Fe-S) centers, to quinones in the photosynthetic chain and possibly in a chloroplast respiratory chain. The immediate electron acceptor for the enzyme in this species is believed to be plastoquinone. Couples the redox reaction to proton translocation, and thus conserves the redox energy in a proton gradient.</text>
</comment>
<comment type="catalytic activity">
    <reaction evidence="1">
        <text>a plastoquinone + NADH + (n+1) H(+)(in) = a plastoquinol + NAD(+) + n H(+)(out)</text>
        <dbReference type="Rhea" id="RHEA:42608"/>
        <dbReference type="Rhea" id="RHEA-COMP:9561"/>
        <dbReference type="Rhea" id="RHEA-COMP:9562"/>
        <dbReference type="ChEBI" id="CHEBI:15378"/>
        <dbReference type="ChEBI" id="CHEBI:17757"/>
        <dbReference type="ChEBI" id="CHEBI:57540"/>
        <dbReference type="ChEBI" id="CHEBI:57945"/>
        <dbReference type="ChEBI" id="CHEBI:62192"/>
    </reaction>
</comment>
<comment type="catalytic activity">
    <reaction evidence="1">
        <text>a plastoquinone + NADPH + (n+1) H(+)(in) = a plastoquinol + NADP(+) + n H(+)(out)</text>
        <dbReference type="Rhea" id="RHEA:42612"/>
        <dbReference type="Rhea" id="RHEA-COMP:9561"/>
        <dbReference type="Rhea" id="RHEA-COMP:9562"/>
        <dbReference type="ChEBI" id="CHEBI:15378"/>
        <dbReference type="ChEBI" id="CHEBI:17757"/>
        <dbReference type="ChEBI" id="CHEBI:57783"/>
        <dbReference type="ChEBI" id="CHEBI:58349"/>
        <dbReference type="ChEBI" id="CHEBI:62192"/>
    </reaction>
</comment>
<comment type="cofactor">
    <cofactor evidence="1">
        <name>[4Fe-4S] cluster</name>
        <dbReference type="ChEBI" id="CHEBI:49883"/>
    </cofactor>
    <text evidence="1">Binds 2 [4Fe-4S] clusters per subunit.</text>
</comment>
<comment type="subunit">
    <text evidence="1">NDH is composed of at least 16 different subunits, 5 of which are encoded in the nucleus.</text>
</comment>
<comment type="subcellular location">
    <subcellularLocation>
        <location evidence="1">Plastid</location>
        <location evidence="1">Chloroplast thylakoid membrane</location>
        <topology evidence="1">Peripheral membrane protein</topology>
    </subcellularLocation>
</comment>
<comment type="similarity">
    <text evidence="1">Belongs to the complex I 23 kDa subunit family.</text>
</comment>
<feature type="chain" id="PRO_0000250776" description="NAD(P)H-quinone oxidoreductase subunit I, chloroplastic">
    <location>
        <begin position="1"/>
        <end position="166"/>
    </location>
</feature>
<feature type="domain" description="4Fe-4S ferredoxin-type 1" evidence="1">
    <location>
        <begin position="55"/>
        <end position="84"/>
    </location>
</feature>
<feature type="domain" description="4Fe-4S ferredoxin-type 2" evidence="1">
    <location>
        <begin position="95"/>
        <end position="124"/>
    </location>
</feature>
<feature type="binding site" evidence="1">
    <location>
        <position position="64"/>
    </location>
    <ligand>
        <name>[4Fe-4S] cluster</name>
        <dbReference type="ChEBI" id="CHEBI:49883"/>
        <label>1</label>
    </ligand>
</feature>
<feature type="binding site" evidence="1">
    <location>
        <position position="67"/>
    </location>
    <ligand>
        <name>[4Fe-4S] cluster</name>
        <dbReference type="ChEBI" id="CHEBI:49883"/>
        <label>1</label>
    </ligand>
</feature>
<feature type="binding site" evidence="1">
    <location>
        <position position="70"/>
    </location>
    <ligand>
        <name>[4Fe-4S] cluster</name>
        <dbReference type="ChEBI" id="CHEBI:49883"/>
        <label>1</label>
    </ligand>
</feature>
<feature type="binding site" evidence="1">
    <location>
        <position position="74"/>
    </location>
    <ligand>
        <name>[4Fe-4S] cluster</name>
        <dbReference type="ChEBI" id="CHEBI:49883"/>
        <label>2</label>
    </ligand>
</feature>
<feature type="binding site" evidence="1">
    <location>
        <position position="104"/>
    </location>
    <ligand>
        <name>[4Fe-4S] cluster</name>
        <dbReference type="ChEBI" id="CHEBI:49883"/>
        <label>2</label>
    </ligand>
</feature>
<feature type="binding site" evidence="1">
    <location>
        <position position="107"/>
    </location>
    <ligand>
        <name>[4Fe-4S] cluster</name>
        <dbReference type="ChEBI" id="CHEBI:49883"/>
        <label>2</label>
    </ligand>
</feature>
<feature type="binding site" evidence="1">
    <location>
        <position position="110"/>
    </location>
    <ligand>
        <name>[4Fe-4S] cluster</name>
        <dbReference type="ChEBI" id="CHEBI:49883"/>
        <label>2</label>
    </ligand>
</feature>
<feature type="binding site" evidence="1">
    <location>
        <position position="114"/>
    </location>
    <ligand>
        <name>[4Fe-4S] cluster</name>
        <dbReference type="ChEBI" id="CHEBI:49883"/>
        <label>1</label>
    </ligand>
</feature>
<geneLocation type="chloroplast"/>
<organism>
    <name type="scientific">Desmanthodium fruticosum</name>
    <dbReference type="NCBI Taxonomy" id="217841"/>
    <lineage>
        <taxon>Eukaryota</taxon>
        <taxon>Viridiplantae</taxon>
        <taxon>Streptophyta</taxon>
        <taxon>Embryophyta</taxon>
        <taxon>Tracheophyta</taxon>
        <taxon>Spermatophyta</taxon>
        <taxon>Magnoliopsida</taxon>
        <taxon>eudicotyledons</taxon>
        <taxon>Gunneridae</taxon>
        <taxon>Pentapetalae</taxon>
        <taxon>asterids</taxon>
        <taxon>campanulids</taxon>
        <taxon>Asterales</taxon>
        <taxon>Asteraceae</taxon>
        <taxon>Asteroideae</taxon>
        <taxon>Heliantheae alliance</taxon>
        <taxon>Millerieae</taxon>
        <taxon>Desmanthodium</taxon>
    </lineage>
</organism>